<dbReference type="EC" id="2.3.1.-"/>
<dbReference type="EMBL" id="CU329671">
    <property type="protein sequence ID" value="CAB54811.1"/>
    <property type="molecule type" value="Genomic_DNA"/>
</dbReference>
<dbReference type="PIR" id="T40547">
    <property type="entry name" value="T40547"/>
</dbReference>
<dbReference type="RefSeq" id="NP_595301.1">
    <property type="nucleotide sequence ID" value="NM_001021208.2"/>
</dbReference>
<dbReference type="SMR" id="Q9USR6"/>
<dbReference type="BioGRID" id="276791">
    <property type="interactions" value="18"/>
</dbReference>
<dbReference type="FunCoup" id="Q9USR6">
    <property type="interactions" value="241"/>
</dbReference>
<dbReference type="STRING" id="284812.Q9USR6"/>
<dbReference type="iPTMnet" id="Q9USR6"/>
<dbReference type="PaxDb" id="4896-SPBC577.03c.1"/>
<dbReference type="EnsemblFungi" id="SPBC577.03c.1">
    <property type="protein sequence ID" value="SPBC577.03c.1:pep"/>
    <property type="gene ID" value="SPBC577.03c"/>
</dbReference>
<dbReference type="KEGG" id="spo:2540260"/>
<dbReference type="PomBase" id="SPBC577.03c"/>
<dbReference type="VEuPathDB" id="FungiDB:SPBC577.03c"/>
<dbReference type="eggNOG" id="KOG4135">
    <property type="taxonomic scope" value="Eukaryota"/>
</dbReference>
<dbReference type="HOGENOM" id="CLU_073102_0_0_1"/>
<dbReference type="InParanoid" id="Q9USR6"/>
<dbReference type="OMA" id="WHVPRYH"/>
<dbReference type="PhylomeDB" id="Q9USR6"/>
<dbReference type="PRO" id="PR:Q9USR6"/>
<dbReference type="Proteomes" id="UP000002485">
    <property type="component" value="Chromosome II"/>
</dbReference>
<dbReference type="GO" id="GO:0005829">
    <property type="term" value="C:cytosol"/>
    <property type="evidence" value="ECO:0007005"/>
    <property type="project" value="PomBase"/>
</dbReference>
<dbReference type="GO" id="GO:0005634">
    <property type="term" value="C:nucleus"/>
    <property type="evidence" value="ECO:0007005"/>
    <property type="project" value="PomBase"/>
</dbReference>
<dbReference type="GO" id="GO:0008080">
    <property type="term" value="F:N-acetyltransferase activity"/>
    <property type="evidence" value="ECO:0000255"/>
    <property type="project" value="PomBase"/>
</dbReference>
<dbReference type="FunFam" id="3.40.630.30:FF:000289">
    <property type="entry name" value="Predicted protein"/>
    <property type="match status" value="1"/>
</dbReference>
<dbReference type="Gene3D" id="3.40.630.30">
    <property type="match status" value="1"/>
</dbReference>
<dbReference type="InterPro" id="IPR016181">
    <property type="entry name" value="Acyl_CoA_acyltransferase"/>
</dbReference>
<dbReference type="InterPro" id="IPR000182">
    <property type="entry name" value="GNAT_dom"/>
</dbReference>
<dbReference type="InterPro" id="IPR039135">
    <property type="entry name" value="NAT9-like"/>
</dbReference>
<dbReference type="PANTHER" id="PTHR13256:SF16">
    <property type="entry name" value="ALPHA_BETA-TUBULIN-N-ACETYLTRANSFERASE 9"/>
    <property type="match status" value="1"/>
</dbReference>
<dbReference type="PANTHER" id="PTHR13256">
    <property type="entry name" value="N-ACETYLTRANSFERASE 9"/>
    <property type="match status" value="1"/>
</dbReference>
<dbReference type="Pfam" id="PF13302">
    <property type="entry name" value="Acetyltransf_3"/>
    <property type="match status" value="1"/>
</dbReference>
<dbReference type="SUPFAM" id="SSF55729">
    <property type="entry name" value="Acyl-CoA N-acyltransferases (Nat)"/>
    <property type="match status" value="1"/>
</dbReference>
<dbReference type="PROSITE" id="PS51186">
    <property type="entry name" value="GNAT"/>
    <property type="match status" value="1"/>
</dbReference>
<gene>
    <name type="ORF">SPBC577.03c</name>
</gene>
<protein>
    <recommendedName>
        <fullName>N-acetyltransferase 9-like protein</fullName>
        <ecNumber>2.3.1.-</ecNumber>
    </recommendedName>
</protein>
<organism>
    <name type="scientific">Schizosaccharomyces pombe (strain 972 / ATCC 24843)</name>
    <name type="common">Fission yeast</name>
    <dbReference type="NCBI Taxonomy" id="284812"/>
    <lineage>
        <taxon>Eukaryota</taxon>
        <taxon>Fungi</taxon>
        <taxon>Dikarya</taxon>
        <taxon>Ascomycota</taxon>
        <taxon>Taphrinomycotina</taxon>
        <taxon>Schizosaccharomycetes</taxon>
        <taxon>Schizosaccharomycetales</taxon>
        <taxon>Schizosaccharomycetaceae</taxon>
        <taxon>Schizosaccharomyces</taxon>
    </lineage>
</organism>
<sequence>MKINQNTTVDCGNLILVPYQKCHVLKYHNWMKNEELQELTCSEPLTLDEEYQMQASWSTDEDKLTFIVLLNENDEAKKPSILDHVKAHSVESMIGDVNMFLTEEYADGIEEFDDSPSDANATNATKESEVHIVGELELMIAEPQNRRKGYGTKIVDAFLHYVESSGIAKNKQILKYRVKVGSQNKPSIRLFKKLGFSQVKYNAYFDHVELELMRTS</sequence>
<name>NAT9_SCHPO</name>
<feature type="chain" id="PRO_0000310301" description="N-acetyltransferase 9-like protein">
    <location>
        <begin position="1"/>
        <end position="216"/>
    </location>
</feature>
<feature type="domain" description="N-acetyltransferase" evidence="1">
    <location>
        <begin position="68"/>
        <end position="215"/>
    </location>
</feature>
<keyword id="KW-0012">Acyltransferase</keyword>
<keyword id="KW-0963">Cytoplasm</keyword>
<keyword id="KW-0539">Nucleus</keyword>
<keyword id="KW-1185">Reference proteome</keyword>
<keyword id="KW-0808">Transferase</keyword>
<accession>Q9USR6</accession>
<proteinExistence type="inferred from homology"/>
<evidence type="ECO:0000255" key="1">
    <source>
        <dbReference type="PROSITE-ProRule" id="PRU00532"/>
    </source>
</evidence>
<evidence type="ECO:0000269" key="2">
    <source>
    </source>
</evidence>
<evidence type="ECO:0000305" key="3"/>
<comment type="subcellular location">
    <subcellularLocation>
        <location evidence="2">Cytoplasm</location>
    </subcellularLocation>
    <subcellularLocation>
        <location evidence="2">Nucleus</location>
    </subcellularLocation>
</comment>
<comment type="similarity">
    <text evidence="3">Belongs to the acetyltransferase family. GNAT subfamily.</text>
</comment>
<reference key="1">
    <citation type="journal article" date="2002" name="Nature">
        <title>The genome sequence of Schizosaccharomyces pombe.</title>
        <authorList>
            <person name="Wood V."/>
            <person name="Gwilliam R."/>
            <person name="Rajandream M.A."/>
            <person name="Lyne M.H."/>
            <person name="Lyne R."/>
            <person name="Stewart A."/>
            <person name="Sgouros J.G."/>
            <person name="Peat N."/>
            <person name="Hayles J."/>
            <person name="Baker S.G."/>
            <person name="Basham D."/>
            <person name="Bowman S."/>
            <person name="Brooks K."/>
            <person name="Brown D."/>
            <person name="Brown S."/>
            <person name="Chillingworth T."/>
            <person name="Churcher C.M."/>
            <person name="Collins M."/>
            <person name="Connor R."/>
            <person name="Cronin A."/>
            <person name="Davis P."/>
            <person name="Feltwell T."/>
            <person name="Fraser A."/>
            <person name="Gentles S."/>
            <person name="Goble A."/>
            <person name="Hamlin N."/>
            <person name="Harris D.E."/>
            <person name="Hidalgo J."/>
            <person name="Hodgson G."/>
            <person name="Holroyd S."/>
            <person name="Hornsby T."/>
            <person name="Howarth S."/>
            <person name="Huckle E.J."/>
            <person name="Hunt S."/>
            <person name="Jagels K."/>
            <person name="James K.D."/>
            <person name="Jones L."/>
            <person name="Jones M."/>
            <person name="Leather S."/>
            <person name="McDonald S."/>
            <person name="McLean J."/>
            <person name="Mooney P."/>
            <person name="Moule S."/>
            <person name="Mungall K.L."/>
            <person name="Murphy L.D."/>
            <person name="Niblett D."/>
            <person name="Odell C."/>
            <person name="Oliver K."/>
            <person name="O'Neil S."/>
            <person name="Pearson D."/>
            <person name="Quail M.A."/>
            <person name="Rabbinowitsch E."/>
            <person name="Rutherford K.M."/>
            <person name="Rutter S."/>
            <person name="Saunders D."/>
            <person name="Seeger K."/>
            <person name="Sharp S."/>
            <person name="Skelton J."/>
            <person name="Simmonds M.N."/>
            <person name="Squares R."/>
            <person name="Squares S."/>
            <person name="Stevens K."/>
            <person name="Taylor K."/>
            <person name="Taylor R.G."/>
            <person name="Tivey A."/>
            <person name="Walsh S.V."/>
            <person name="Warren T."/>
            <person name="Whitehead S."/>
            <person name="Woodward J.R."/>
            <person name="Volckaert G."/>
            <person name="Aert R."/>
            <person name="Robben J."/>
            <person name="Grymonprez B."/>
            <person name="Weltjens I."/>
            <person name="Vanstreels E."/>
            <person name="Rieger M."/>
            <person name="Schaefer M."/>
            <person name="Mueller-Auer S."/>
            <person name="Gabel C."/>
            <person name="Fuchs M."/>
            <person name="Duesterhoeft A."/>
            <person name="Fritzc C."/>
            <person name="Holzer E."/>
            <person name="Moestl D."/>
            <person name="Hilbert H."/>
            <person name="Borzym K."/>
            <person name="Langer I."/>
            <person name="Beck A."/>
            <person name="Lehrach H."/>
            <person name="Reinhardt R."/>
            <person name="Pohl T.M."/>
            <person name="Eger P."/>
            <person name="Zimmermann W."/>
            <person name="Wedler H."/>
            <person name="Wambutt R."/>
            <person name="Purnelle B."/>
            <person name="Goffeau A."/>
            <person name="Cadieu E."/>
            <person name="Dreano S."/>
            <person name="Gloux S."/>
            <person name="Lelaure V."/>
            <person name="Mottier S."/>
            <person name="Galibert F."/>
            <person name="Aves S.J."/>
            <person name="Xiang Z."/>
            <person name="Hunt C."/>
            <person name="Moore K."/>
            <person name="Hurst S.M."/>
            <person name="Lucas M."/>
            <person name="Rochet M."/>
            <person name="Gaillardin C."/>
            <person name="Tallada V.A."/>
            <person name="Garzon A."/>
            <person name="Thode G."/>
            <person name="Daga R.R."/>
            <person name="Cruzado L."/>
            <person name="Jimenez J."/>
            <person name="Sanchez M."/>
            <person name="del Rey F."/>
            <person name="Benito J."/>
            <person name="Dominguez A."/>
            <person name="Revuelta J.L."/>
            <person name="Moreno S."/>
            <person name="Armstrong J."/>
            <person name="Forsburg S.L."/>
            <person name="Cerutti L."/>
            <person name="Lowe T."/>
            <person name="McCombie W.R."/>
            <person name="Paulsen I."/>
            <person name="Potashkin J."/>
            <person name="Shpakovski G.V."/>
            <person name="Ussery D."/>
            <person name="Barrell B.G."/>
            <person name="Nurse P."/>
        </authorList>
    </citation>
    <scope>NUCLEOTIDE SEQUENCE [LARGE SCALE GENOMIC DNA]</scope>
    <source>
        <strain>972 / ATCC 24843</strain>
    </source>
</reference>
<reference key="2">
    <citation type="journal article" date="2006" name="Nat. Biotechnol.">
        <title>ORFeome cloning and global analysis of protein localization in the fission yeast Schizosaccharomyces pombe.</title>
        <authorList>
            <person name="Matsuyama A."/>
            <person name="Arai R."/>
            <person name="Yashiroda Y."/>
            <person name="Shirai A."/>
            <person name="Kamata A."/>
            <person name="Sekido S."/>
            <person name="Kobayashi Y."/>
            <person name="Hashimoto A."/>
            <person name="Hamamoto M."/>
            <person name="Hiraoka Y."/>
            <person name="Horinouchi S."/>
            <person name="Yoshida M."/>
        </authorList>
    </citation>
    <scope>SUBCELLULAR LOCATION [LARGE SCALE ANALYSIS]</scope>
</reference>